<protein>
    <recommendedName>
        <fullName evidence="1">Large ribosomal subunit protein uL29</fullName>
    </recommendedName>
    <alternativeName>
        <fullName evidence="2">50S ribosomal protein L29</fullName>
    </alternativeName>
</protein>
<organism>
    <name type="scientific">Syntrophobacter fumaroxidans (strain DSM 10017 / MPOB)</name>
    <dbReference type="NCBI Taxonomy" id="335543"/>
    <lineage>
        <taxon>Bacteria</taxon>
        <taxon>Pseudomonadati</taxon>
        <taxon>Thermodesulfobacteriota</taxon>
        <taxon>Syntrophobacteria</taxon>
        <taxon>Syntrophobacterales</taxon>
        <taxon>Syntrophobacteraceae</taxon>
        <taxon>Syntrophobacter</taxon>
    </lineage>
</organism>
<name>RL29_SYNFM</name>
<gene>
    <name evidence="1" type="primary">rpmC</name>
    <name type="ordered locus">Sfum_1563</name>
</gene>
<keyword id="KW-1185">Reference proteome</keyword>
<keyword id="KW-0687">Ribonucleoprotein</keyword>
<keyword id="KW-0689">Ribosomal protein</keyword>
<sequence>MKTNALRDMTNDELLQKLAEIRQALFNLNFQHVTGQLENTAQINKNRKDIARILTILHEREQKTAA</sequence>
<dbReference type="EMBL" id="CP000478">
    <property type="protein sequence ID" value="ABK17250.1"/>
    <property type="molecule type" value="Genomic_DNA"/>
</dbReference>
<dbReference type="RefSeq" id="WP_011698420.1">
    <property type="nucleotide sequence ID" value="NC_008554.1"/>
</dbReference>
<dbReference type="SMR" id="A0LIJ8"/>
<dbReference type="FunCoup" id="A0LIJ8">
    <property type="interactions" value="453"/>
</dbReference>
<dbReference type="STRING" id="335543.Sfum_1563"/>
<dbReference type="KEGG" id="sfu:Sfum_1563"/>
<dbReference type="eggNOG" id="COG0255">
    <property type="taxonomic scope" value="Bacteria"/>
</dbReference>
<dbReference type="HOGENOM" id="CLU_158491_5_2_7"/>
<dbReference type="InParanoid" id="A0LIJ8"/>
<dbReference type="OrthoDB" id="9815192at2"/>
<dbReference type="Proteomes" id="UP000001784">
    <property type="component" value="Chromosome"/>
</dbReference>
<dbReference type="GO" id="GO:0022625">
    <property type="term" value="C:cytosolic large ribosomal subunit"/>
    <property type="evidence" value="ECO:0007669"/>
    <property type="project" value="TreeGrafter"/>
</dbReference>
<dbReference type="GO" id="GO:0003735">
    <property type="term" value="F:structural constituent of ribosome"/>
    <property type="evidence" value="ECO:0007669"/>
    <property type="project" value="InterPro"/>
</dbReference>
<dbReference type="GO" id="GO:0006412">
    <property type="term" value="P:translation"/>
    <property type="evidence" value="ECO:0007669"/>
    <property type="project" value="UniProtKB-UniRule"/>
</dbReference>
<dbReference type="CDD" id="cd00427">
    <property type="entry name" value="Ribosomal_L29_HIP"/>
    <property type="match status" value="1"/>
</dbReference>
<dbReference type="FunFam" id="1.10.287.310:FF:000001">
    <property type="entry name" value="50S ribosomal protein L29"/>
    <property type="match status" value="1"/>
</dbReference>
<dbReference type="Gene3D" id="1.10.287.310">
    <property type="match status" value="1"/>
</dbReference>
<dbReference type="HAMAP" id="MF_00374">
    <property type="entry name" value="Ribosomal_uL29"/>
    <property type="match status" value="1"/>
</dbReference>
<dbReference type="InterPro" id="IPR050063">
    <property type="entry name" value="Ribosomal_protein_uL29"/>
</dbReference>
<dbReference type="InterPro" id="IPR001854">
    <property type="entry name" value="Ribosomal_uL29"/>
</dbReference>
<dbReference type="InterPro" id="IPR036049">
    <property type="entry name" value="Ribosomal_uL29_sf"/>
</dbReference>
<dbReference type="NCBIfam" id="TIGR00012">
    <property type="entry name" value="L29"/>
    <property type="match status" value="1"/>
</dbReference>
<dbReference type="PANTHER" id="PTHR10916">
    <property type="entry name" value="60S RIBOSOMAL PROTEIN L35/50S RIBOSOMAL PROTEIN L29"/>
    <property type="match status" value="1"/>
</dbReference>
<dbReference type="PANTHER" id="PTHR10916:SF0">
    <property type="entry name" value="LARGE RIBOSOMAL SUBUNIT PROTEIN UL29C"/>
    <property type="match status" value="1"/>
</dbReference>
<dbReference type="Pfam" id="PF00831">
    <property type="entry name" value="Ribosomal_L29"/>
    <property type="match status" value="1"/>
</dbReference>
<dbReference type="SUPFAM" id="SSF46561">
    <property type="entry name" value="Ribosomal protein L29 (L29p)"/>
    <property type="match status" value="1"/>
</dbReference>
<reference key="1">
    <citation type="submission" date="2006-10" db="EMBL/GenBank/DDBJ databases">
        <title>Complete sequence of Syntrophobacter fumaroxidans MPOB.</title>
        <authorList>
            <consortium name="US DOE Joint Genome Institute"/>
            <person name="Copeland A."/>
            <person name="Lucas S."/>
            <person name="Lapidus A."/>
            <person name="Barry K."/>
            <person name="Detter J.C."/>
            <person name="Glavina del Rio T."/>
            <person name="Hammon N."/>
            <person name="Israni S."/>
            <person name="Pitluck S."/>
            <person name="Goltsman E.G."/>
            <person name="Martinez M."/>
            <person name="Schmutz J."/>
            <person name="Larimer F."/>
            <person name="Land M."/>
            <person name="Hauser L."/>
            <person name="Kyrpides N."/>
            <person name="Kim E."/>
            <person name="Boone D.R."/>
            <person name="Brockman F."/>
            <person name="Culley D."/>
            <person name="Ferry J."/>
            <person name="Gunsalus R."/>
            <person name="McInerney M.J."/>
            <person name="Morrison M."/>
            <person name="Plugge C."/>
            <person name="Rohlin L."/>
            <person name="Scholten J."/>
            <person name="Sieber J."/>
            <person name="Stams A.J.M."/>
            <person name="Worm P."/>
            <person name="Henstra A.M."/>
            <person name="Richardson P."/>
        </authorList>
    </citation>
    <scope>NUCLEOTIDE SEQUENCE [LARGE SCALE GENOMIC DNA]</scope>
    <source>
        <strain>DSM 10017 / MPOB</strain>
    </source>
</reference>
<proteinExistence type="inferred from homology"/>
<feature type="chain" id="PRO_1000007635" description="Large ribosomal subunit protein uL29">
    <location>
        <begin position="1"/>
        <end position="66"/>
    </location>
</feature>
<evidence type="ECO:0000255" key="1">
    <source>
        <dbReference type="HAMAP-Rule" id="MF_00374"/>
    </source>
</evidence>
<evidence type="ECO:0000305" key="2"/>
<accession>A0LIJ8</accession>
<comment type="similarity">
    <text evidence="1">Belongs to the universal ribosomal protein uL29 family.</text>
</comment>